<reference key="1">
    <citation type="journal article" date="1997" name="Nature">
        <title>Molecular basis of symbiosis between Rhizobium and legumes.</title>
        <authorList>
            <person name="Freiberg C.A."/>
            <person name="Fellay R."/>
            <person name="Bairoch A."/>
            <person name="Broughton W.J."/>
            <person name="Rosenthal A."/>
            <person name="Perret X."/>
        </authorList>
    </citation>
    <scope>NUCLEOTIDE SEQUENCE [LARGE SCALE GENOMIC DNA]</scope>
    <source>
        <strain>NBRC 101917 / NGR234</strain>
    </source>
</reference>
<reference key="2">
    <citation type="journal article" date="2009" name="Appl. Environ. Microbiol.">
        <title>Rhizobium sp. strain NGR234 possesses a remarkable number of secretion systems.</title>
        <authorList>
            <person name="Schmeisser C."/>
            <person name="Liesegang H."/>
            <person name="Krysciak D."/>
            <person name="Bakkou N."/>
            <person name="Le Quere A."/>
            <person name="Wollherr A."/>
            <person name="Heinemeyer I."/>
            <person name="Morgenstern B."/>
            <person name="Pommerening-Roeser A."/>
            <person name="Flores M."/>
            <person name="Palacios R."/>
            <person name="Brenner S."/>
            <person name="Gottschalk G."/>
            <person name="Schmitz R.A."/>
            <person name="Broughton W.J."/>
            <person name="Perret X."/>
            <person name="Strittmatter A.W."/>
            <person name="Streit W.R."/>
        </authorList>
    </citation>
    <scope>NUCLEOTIDE SEQUENCE [LARGE SCALE GENOMIC DNA]</scope>
    <source>
        <strain>NBRC 101917 / NGR234</strain>
    </source>
</reference>
<accession>P55697</accession>
<gene>
    <name type="ordered locus">NGR_a00840</name>
    <name type="ORF">y4xF</name>
</gene>
<sequence>MKSSFVTRRFSWCRNIYYASAAAADSGREVCTFTGSMTQVKFSVFCDAEDDHSSNQIM</sequence>
<geneLocation type="plasmid">
    <name>sym pNGR234a</name>
</geneLocation>
<dbReference type="EMBL" id="U00090">
    <property type="protein sequence ID" value="AAB91928.1"/>
    <property type="molecule type" value="Genomic_DNA"/>
</dbReference>
<dbReference type="PIR" id="T10833">
    <property type="entry name" value="T10833"/>
</dbReference>
<dbReference type="RefSeq" id="NP_444141.1">
    <property type="nucleotide sequence ID" value="NC_000914.2"/>
</dbReference>
<dbReference type="RefSeq" id="WP_010875125.1">
    <property type="nucleotide sequence ID" value="NC_000914.2"/>
</dbReference>
<dbReference type="KEGG" id="rhi:NGR_a00840"/>
<dbReference type="PATRIC" id="fig|394.7.peg.73"/>
<dbReference type="HOGENOM" id="CLU_2976241_0_0_5"/>
<dbReference type="OrthoDB" id="8278262at2"/>
<dbReference type="Proteomes" id="UP000001054">
    <property type="component" value="Plasmid pNGR234a"/>
</dbReference>
<name>Y4XF_SINFN</name>
<proteinExistence type="predicted"/>
<keyword id="KW-0614">Plasmid</keyword>
<keyword id="KW-1185">Reference proteome</keyword>
<feature type="chain" id="PRO_0000200964" description="Uncharacterized protein y4xF">
    <location>
        <begin position="1"/>
        <end position="58"/>
    </location>
</feature>
<protein>
    <recommendedName>
        <fullName>Uncharacterized protein y4xF</fullName>
    </recommendedName>
</protein>
<organism>
    <name type="scientific">Sinorhizobium fredii (strain NBRC 101917 / NGR234)</name>
    <dbReference type="NCBI Taxonomy" id="394"/>
    <lineage>
        <taxon>Bacteria</taxon>
        <taxon>Pseudomonadati</taxon>
        <taxon>Pseudomonadota</taxon>
        <taxon>Alphaproteobacteria</taxon>
        <taxon>Hyphomicrobiales</taxon>
        <taxon>Rhizobiaceae</taxon>
        <taxon>Sinorhizobium/Ensifer group</taxon>
        <taxon>Sinorhizobium</taxon>
    </lineage>
</organism>